<name>MOBA_PSEPG</name>
<comment type="function">
    <text evidence="1">Transfers a GMP moiety from GTP to Mo-molybdopterin (Mo-MPT) cofactor (Moco or molybdenum cofactor) to form Mo-molybdopterin guanine dinucleotide (Mo-MGD) cofactor.</text>
</comment>
<comment type="catalytic activity">
    <reaction evidence="1">
        <text>Mo-molybdopterin + GTP + H(+) = Mo-molybdopterin guanine dinucleotide + diphosphate</text>
        <dbReference type="Rhea" id="RHEA:34243"/>
        <dbReference type="ChEBI" id="CHEBI:15378"/>
        <dbReference type="ChEBI" id="CHEBI:33019"/>
        <dbReference type="ChEBI" id="CHEBI:37565"/>
        <dbReference type="ChEBI" id="CHEBI:71302"/>
        <dbReference type="ChEBI" id="CHEBI:71310"/>
        <dbReference type="EC" id="2.7.7.77"/>
    </reaction>
</comment>
<comment type="cofactor">
    <cofactor evidence="1">
        <name>Mg(2+)</name>
        <dbReference type="ChEBI" id="CHEBI:18420"/>
    </cofactor>
</comment>
<comment type="subunit">
    <text evidence="1">Monomer.</text>
</comment>
<comment type="subcellular location">
    <subcellularLocation>
        <location evidence="1">Cytoplasm</location>
    </subcellularLocation>
</comment>
<comment type="domain">
    <text evidence="1">The N-terminal domain determines nucleotide recognition and specific binding, while the C-terminal domain determines the specific binding to the target protein.</text>
</comment>
<comment type="similarity">
    <text evidence="1">Belongs to the MobA family.</text>
</comment>
<evidence type="ECO:0000255" key="1">
    <source>
        <dbReference type="HAMAP-Rule" id="MF_00316"/>
    </source>
</evidence>
<feature type="chain" id="PRO_1000079111" description="Molybdenum cofactor guanylyltransferase">
    <location>
        <begin position="1"/>
        <end position="191"/>
    </location>
</feature>
<feature type="binding site" evidence="1">
    <location>
        <begin position="13"/>
        <end position="15"/>
    </location>
    <ligand>
        <name>GTP</name>
        <dbReference type="ChEBI" id="CHEBI:37565"/>
    </ligand>
</feature>
<feature type="binding site" evidence="1">
    <location>
        <position position="26"/>
    </location>
    <ligand>
        <name>GTP</name>
        <dbReference type="ChEBI" id="CHEBI:37565"/>
    </ligand>
</feature>
<feature type="binding site" evidence="1">
    <location>
        <position position="72"/>
    </location>
    <ligand>
        <name>GTP</name>
        <dbReference type="ChEBI" id="CHEBI:37565"/>
    </ligand>
</feature>
<feature type="binding site" evidence="1">
    <location>
        <position position="102"/>
    </location>
    <ligand>
        <name>GTP</name>
        <dbReference type="ChEBI" id="CHEBI:37565"/>
    </ligand>
</feature>
<feature type="binding site" evidence="1">
    <location>
        <position position="102"/>
    </location>
    <ligand>
        <name>Mg(2+)</name>
        <dbReference type="ChEBI" id="CHEBI:18420"/>
    </ligand>
</feature>
<gene>
    <name evidence="1" type="primary">mobA</name>
    <name type="ordered locus">PputGB1_2480</name>
</gene>
<organism>
    <name type="scientific">Pseudomonas putida (strain GB-1)</name>
    <dbReference type="NCBI Taxonomy" id="76869"/>
    <lineage>
        <taxon>Bacteria</taxon>
        <taxon>Pseudomonadati</taxon>
        <taxon>Pseudomonadota</taxon>
        <taxon>Gammaproteobacteria</taxon>
        <taxon>Pseudomonadales</taxon>
        <taxon>Pseudomonadaceae</taxon>
        <taxon>Pseudomonas</taxon>
    </lineage>
</organism>
<protein>
    <recommendedName>
        <fullName evidence="1">Molybdenum cofactor guanylyltransferase</fullName>
        <shortName evidence="1">MoCo guanylyltransferase</shortName>
        <ecNumber evidence="1">2.7.7.77</ecNumber>
    </recommendedName>
    <alternativeName>
        <fullName evidence="1">GTP:molybdopterin guanylyltransferase</fullName>
    </alternativeName>
    <alternativeName>
        <fullName evidence="1">Mo-MPT guanylyltransferase</fullName>
    </alternativeName>
    <alternativeName>
        <fullName evidence="1">Molybdopterin guanylyltransferase</fullName>
    </alternativeName>
    <alternativeName>
        <fullName evidence="1">Molybdopterin-guanine dinucleotide synthase</fullName>
        <shortName evidence="1">MGD synthase</shortName>
    </alternativeName>
</protein>
<keyword id="KW-0963">Cytoplasm</keyword>
<keyword id="KW-0342">GTP-binding</keyword>
<keyword id="KW-0460">Magnesium</keyword>
<keyword id="KW-0479">Metal-binding</keyword>
<keyword id="KW-0501">Molybdenum cofactor biosynthesis</keyword>
<keyword id="KW-0547">Nucleotide-binding</keyword>
<keyword id="KW-0808">Transferase</keyword>
<dbReference type="EC" id="2.7.7.77" evidence="1"/>
<dbReference type="EMBL" id="CP000926">
    <property type="protein sequence ID" value="ABY98379.1"/>
    <property type="molecule type" value="Genomic_DNA"/>
</dbReference>
<dbReference type="RefSeq" id="WP_012272122.1">
    <property type="nucleotide sequence ID" value="NC_010322.1"/>
</dbReference>
<dbReference type="SMR" id="B0KQW4"/>
<dbReference type="KEGG" id="ppg:PputGB1_2480"/>
<dbReference type="eggNOG" id="COG0746">
    <property type="taxonomic scope" value="Bacteria"/>
</dbReference>
<dbReference type="HOGENOM" id="CLU_055597_5_1_6"/>
<dbReference type="Proteomes" id="UP000002157">
    <property type="component" value="Chromosome"/>
</dbReference>
<dbReference type="GO" id="GO:0005737">
    <property type="term" value="C:cytoplasm"/>
    <property type="evidence" value="ECO:0007669"/>
    <property type="project" value="UniProtKB-SubCell"/>
</dbReference>
<dbReference type="GO" id="GO:0005525">
    <property type="term" value="F:GTP binding"/>
    <property type="evidence" value="ECO:0007669"/>
    <property type="project" value="UniProtKB-UniRule"/>
</dbReference>
<dbReference type="GO" id="GO:0046872">
    <property type="term" value="F:metal ion binding"/>
    <property type="evidence" value="ECO:0007669"/>
    <property type="project" value="UniProtKB-KW"/>
</dbReference>
<dbReference type="GO" id="GO:0061603">
    <property type="term" value="F:molybdenum cofactor guanylyltransferase activity"/>
    <property type="evidence" value="ECO:0007669"/>
    <property type="project" value="UniProtKB-EC"/>
</dbReference>
<dbReference type="GO" id="GO:1902758">
    <property type="term" value="P:bis(molybdopterin guanine dinucleotide)molybdenum biosynthetic process"/>
    <property type="evidence" value="ECO:0007669"/>
    <property type="project" value="TreeGrafter"/>
</dbReference>
<dbReference type="CDD" id="cd02503">
    <property type="entry name" value="MobA"/>
    <property type="match status" value="1"/>
</dbReference>
<dbReference type="Gene3D" id="3.90.550.10">
    <property type="entry name" value="Spore Coat Polysaccharide Biosynthesis Protein SpsA, Chain A"/>
    <property type="match status" value="1"/>
</dbReference>
<dbReference type="HAMAP" id="MF_00316">
    <property type="entry name" value="MobA"/>
    <property type="match status" value="1"/>
</dbReference>
<dbReference type="InterPro" id="IPR025877">
    <property type="entry name" value="MobA-like_NTP_Trfase"/>
</dbReference>
<dbReference type="InterPro" id="IPR013482">
    <property type="entry name" value="Molybde_CF_guanTrfase"/>
</dbReference>
<dbReference type="InterPro" id="IPR029044">
    <property type="entry name" value="Nucleotide-diphossugar_trans"/>
</dbReference>
<dbReference type="NCBIfam" id="TIGR02665">
    <property type="entry name" value="molyb_mobA"/>
    <property type="match status" value="1"/>
</dbReference>
<dbReference type="PANTHER" id="PTHR19136">
    <property type="entry name" value="MOLYBDENUM COFACTOR GUANYLYLTRANSFERASE"/>
    <property type="match status" value="1"/>
</dbReference>
<dbReference type="PANTHER" id="PTHR19136:SF81">
    <property type="entry name" value="MOLYBDENUM COFACTOR GUANYLYLTRANSFERASE"/>
    <property type="match status" value="1"/>
</dbReference>
<dbReference type="Pfam" id="PF12804">
    <property type="entry name" value="NTP_transf_3"/>
    <property type="match status" value="1"/>
</dbReference>
<dbReference type="SUPFAM" id="SSF53448">
    <property type="entry name" value="Nucleotide-diphospho-sugar transferases"/>
    <property type="match status" value="1"/>
</dbReference>
<accession>B0KQW4</accession>
<sequence length="191" mass="20868">MPDAFPPCSILILAGGRGQRMGGRDKGLIDWQGEPLVAHVQRVVRPLSDDLVISCNRNQEAYRAYADQVVGDAEADFPGPLAGVIAGLKVARHEWVVLLACDAPRVDQVLIEDLLRLAKANDSAAMVRQGEYWQPMFSVLPKRVLPVLEQAWAAGERSLQKALLREAVQGLACADDDCRLSNFNSPELLQG</sequence>
<proteinExistence type="inferred from homology"/>
<reference key="1">
    <citation type="submission" date="2008-01" db="EMBL/GenBank/DDBJ databases">
        <title>Complete sequence of Pseudomonas putida GB-1.</title>
        <authorList>
            <consortium name="US DOE Joint Genome Institute"/>
            <person name="Copeland A."/>
            <person name="Lucas S."/>
            <person name="Lapidus A."/>
            <person name="Barry K."/>
            <person name="Glavina del Rio T."/>
            <person name="Dalin E."/>
            <person name="Tice H."/>
            <person name="Pitluck S."/>
            <person name="Bruce D."/>
            <person name="Goodwin L."/>
            <person name="Chertkov O."/>
            <person name="Brettin T."/>
            <person name="Detter J.C."/>
            <person name="Han C."/>
            <person name="Kuske C.R."/>
            <person name="Schmutz J."/>
            <person name="Larimer F."/>
            <person name="Land M."/>
            <person name="Hauser L."/>
            <person name="Kyrpides N."/>
            <person name="Kim E."/>
            <person name="McCarthy J.K."/>
            <person name="Richardson P."/>
        </authorList>
    </citation>
    <scope>NUCLEOTIDE SEQUENCE [LARGE SCALE GENOMIC DNA]</scope>
    <source>
        <strain>GB-1</strain>
    </source>
</reference>